<keyword id="KW-0238">DNA-binding</keyword>
<keyword id="KW-0539">Nucleus</keyword>
<keyword id="KW-1185">Reference proteome</keyword>
<keyword id="KW-0804">Transcription</keyword>
<keyword id="KW-0805">Transcription regulation</keyword>
<sequence length="248" mass="27502">MVGSRHPDQCAKRWHHSLDPNVKRGPWTMEEDSSLLEAVQKIGRDWKEIGRELFPSRSTTDIKNRYVILSRRRGPSPAIPENCSSIDIETHSSSLADSKPPIPAELLTPEVDFSIANTPCELDSSNLAPDTLSINMTLPSDLPSYLSLPLPDTAETDHALDESSTAWEIPDWTAFDNQCLFTPGASELEGSFTSRNHEEPPQPLPVPDIPGPSTLVLEDLRPETVNLVIDTLLRTNSKFGMRMYNTGS</sequence>
<comment type="function">
    <text evidence="3">Transcription factor that regulates the expression of the gene cluster that mediates the biosynthesis of cichorine, a phytotoxin active against knapweed, corn, and soybeans.</text>
</comment>
<comment type="subcellular location">
    <subcellularLocation>
        <location evidence="1">Nucleus</location>
    </subcellularLocation>
</comment>
<comment type="disruption phenotype">
    <text evidence="3">Abolishes the production of cichorine.</text>
</comment>
<comment type="biotechnology">
    <text evidence="4">Cichorine and its derivatives are promising in the course of developing novel herbicides.</text>
</comment>
<feature type="chain" id="PRO_0000450885" description="Transcription factor cicD">
    <location>
        <begin position="1"/>
        <end position="248"/>
    </location>
</feature>
<feature type="domain" description="HTH myb-type" evidence="1">
    <location>
        <begin position="19"/>
        <end position="74"/>
    </location>
</feature>
<feature type="DNA-binding region" description="H-T-H motif" evidence="1">
    <location>
        <begin position="46"/>
        <end position="70"/>
    </location>
</feature>
<feature type="region of interest" description="Disordered" evidence="2">
    <location>
        <begin position="1"/>
        <end position="25"/>
    </location>
</feature>
<feature type="region of interest" description="Disordered" evidence="2">
    <location>
        <begin position="186"/>
        <end position="208"/>
    </location>
</feature>
<feature type="compositionally biased region" description="Basic and acidic residues" evidence="2">
    <location>
        <begin position="1"/>
        <end position="22"/>
    </location>
</feature>
<proteinExistence type="evidence at protein level"/>
<evidence type="ECO:0000255" key="1">
    <source>
        <dbReference type="PROSITE-ProRule" id="PRU00625"/>
    </source>
</evidence>
<evidence type="ECO:0000256" key="2">
    <source>
        <dbReference type="SAM" id="MobiDB-lite"/>
    </source>
</evidence>
<evidence type="ECO:0000269" key="3">
    <source>
    </source>
</evidence>
<evidence type="ECO:0000269" key="4">
    <source>
    </source>
</evidence>
<evidence type="ECO:0000303" key="5">
    <source>
    </source>
</evidence>
<name>CICD_EMENI</name>
<protein>
    <recommendedName>
        <fullName evidence="5">Transcription factor cicD</fullName>
    </recommendedName>
    <alternativeName>
        <fullName evidence="5">Cichorine biosynthesis cluster protein D</fullName>
    </alternativeName>
</protein>
<dbReference type="EMBL" id="BN001301">
    <property type="protein sequence ID" value="CBF69456.1"/>
    <property type="molecule type" value="Genomic_DNA"/>
</dbReference>
<dbReference type="EMBL" id="AACD01000108">
    <property type="protein sequence ID" value="EAA58468.1"/>
    <property type="molecule type" value="Genomic_DNA"/>
</dbReference>
<dbReference type="RefSeq" id="XP_664050.1">
    <property type="nucleotide sequence ID" value="XM_658958.1"/>
</dbReference>
<dbReference type="SMR" id="A0A1U8QIH0"/>
<dbReference type="EnsemblFungi" id="CBF69456">
    <property type="protein sequence ID" value="CBF69456"/>
    <property type="gene ID" value="ANIA_06446"/>
</dbReference>
<dbReference type="GeneID" id="2871343"/>
<dbReference type="KEGG" id="ani:ANIA_06446"/>
<dbReference type="eggNOG" id="KOG0048">
    <property type="taxonomic scope" value="Eukaryota"/>
</dbReference>
<dbReference type="HOGENOM" id="CLU_1120173_0_0_1"/>
<dbReference type="InParanoid" id="A0A1U8QIH0"/>
<dbReference type="OMA" id="SNSRFRM"/>
<dbReference type="OrthoDB" id="2143914at2759"/>
<dbReference type="Proteomes" id="UP000000560">
    <property type="component" value="Chromosome I"/>
</dbReference>
<dbReference type="GO" id="GO:0005634">
    <property type="term" value="C:nucleus"/>
    <property type="evidence" value="ECO:0000318"/>
    <property type="project" value="GO_Central"/>
</dbReference>
<dbReference type="GO" id="GO:0000981">
    <property type="term" value="F:DNA-binding transcription factor activity, RNA polymerase II-specific"/>
    <property type="evidence" value="ECO:0000318"/>
    <property type="project" value="GO_Central"/>
</dbReference>
<dbReference type="GO" id="GO:0000978">
    <property type="term" value="F:RNA polymerase II cis-regulatory region sequence-specific DNA binding"/>
    <property type="evidence" value="ECO:0000318"/>
    <property type="project" value="GO_Central"/>
</dbReference>
<dbReference type="GO" id="GO:0062032">
    <property type="term" value="P:cichorine biosynthetic process"/>
    <property type="evidence" value="ECO:0000315"/>
    <property type="project" value="GO_Central"/>
</dbReference>
<dbReference type="GO" id="GO:0000278">
    <property type="term" value="P:mitotic cell cycle"/>
    <property type="evidence" value="ECO:0000318"/>
    <property type="project" value="GO_Central"/>
</dbReference>
<dbReference type="GO" id="GO:0045944">
    <property type="term" value="P:positive regulation of transcription by RNA polymerase II"/>
    <property type="evidence" value="ECO:0000318"/>
    <property type="project" value="GO_Central"/>
</dbReference>
<dbReference type="CDD" id="cd11660">
    <property type="entry name" value="SANT_TRF"/>
    <property type="match status" value="1"/>
</dbReference>
<dbReference type="Gene3D" id="1.10.10.60">
    <property type="entry name" value="Homeodomain-like"/>
    <property type="match status" value="1"/>
</dbReference>
<dbReference type="InterPro" id="IPR009057">
    <property type="entry name" value="Homeodomain-like_sf"/>
</dbReference>
<dbReference type="InterPro" id="IPR017930">
    <property type="entry name" value="Myb_dom"/>
</dbReference>
<dbReference type="InterPro" id="IPR050560">
    <property type="entry name" value="MYB_TF"/>
</dbReference>
<dbReference type="InterPro" id="IPR001005">
    <property type="entry name" value="SANT/Myb"/>
</dbReference>
<dbReference type="PANTHER" id="PTHR45614">
    <property type="entry name" value="MYB PROTEIN-RELATED"/>
    <property type="match status" value="1"/>
</dbReference>
<dbReference type="PANTHER" id="PTHR45614:SF265">
    <property type="entry name" value="MYB-LIKE DOMAIN-CONTAINING PROTEIN-RELATED"/>
    <property type="match status" value="1"/>
</dbReference>
<dbReference type="Pfam" id="PF00249">
    <property type="entry name" value="Myb_DNA-binding"/>
    <property type="match status" value="1"/>
</dbReference>
<dbReference type="SMART" id="SM00717">
    <property type="entry name" value="SANT"/>
    <property type="match status" value="1"/>
</dbReference>
<dbReference type="SUPFAM" id="SSF46689">
    <property type="entry name" value="Homeodomain-like"/>
    <property type="match status" value="1"/>
</dbReference>
<dbReference type="PROSITE" id="PS51294">
    <property type="entry name" value="HTH_MYB"/>
    <property type="match status" value="1"/>
</dbReference>
<accession>A0A1U8QIH0</accession>
<accession>C8V0D8</accession>
<accession>Q5AZ34</accession>
<gene>
    <name evidence="5" type="primary">cicD</name>
    <name type="ORF">AN6446</name>
    <name type="ORF">ANIA_06446</name>
</gene>
<organism>
    <name type="scientific">Emericella nidulans (strain FGSC A4 / ATCC 38163 / CBS 112.46 / NRRL 194 / M139)</name>
    <name type="common">Aspergillus nidulans</name>
    <dbReference type="NCBI Taxonomy" id="227321"/>
    <lineage>
        <taxon>Eukaryota</taxon>
        <taxon>Fungi</taxon>
        <taxon>Dikarya</taxon>
        <taxon>Ascomycota</taxon>
        <taxon>Pezizomycotina</taxon>
        <taxon>Eurotiomycetes</taxon>
        <taxon>Eurotiomycetidae</taxon>
        <taxon>Eurotiales</taxon>
        <taxon>Aspergillaceae</taxon>
        <taxon>Aspergillus</taxon>
        <taxon>Aspergillus subgen. Nidulantes</taxon>
    </lineage>
</organism>
<reference key="1">
    <citation type="journal article" date="2005" name="Nature">
        <title>Sequencing of Aspergillus nidulans and comparative analysis with A. fumigatus and A. oryzae.</title>
        <authorList>
            <person name="Galagan J.E."/>
            <person name="Calvo S.E."/>
            <person name="Cuomo C."/>
            <person name="Ma L.-J."/>
            <person name="Wortman J.R."/>
            <person name="Batzoglou S."/>
            <person name="Lee S.-I."/>
            <person name="Bastuerkmen M."/>
            <person name="Spevak C.C."/>
            <person name="Clutterbuck J."/>
            <person name="Kapitonov V."/>
            <person name="Jurka J."/>
            <person name="Scazzocchio C."/>
            <person name="Farman M.L."/>
            <person name="Butler J."/>
            <person name="Purcell S."/>
            <person name="Harris S."/>
            <person name="Braus G.H."/>
            <person name="Draht O."/>
            <person name="Busch S."/>
            <person name="D'Enfert C."/>
            <person name="Bouchier C."/>
            <person name="Goldman G.H."/>
            <person name="Bell-Pedersen D."/>
            <person name="Griffiths-Jones S."/>
            <person name="Doonan J.H."/>
            <person name="Yu J."/>
            <person name="Vienken K."/>
            <person name="Pain A."/>
            <person name="Freitag M."/>
            <person name="Selker E.U."/>
            <person name="Archer D.B."/>
            <person name="Penalva M.A."/>
            <person name="Oakley B.R."/>
            <person name="Momany M."/>
            <person name="Tanaka T."/>
            <person name="Kumagai T."/>
            <person name="Asai K."/>
            <person name="Machida M."/>
            <person name="Nierman W.C."/>
            <person name="Denning D.W."/>
            <person name="Caddick M.X."/>
            <person name="Hynes M."/>
            <person name="Paoletti M."/>
            <person name="Fischer R."/>
            <person name="Miller B.L."/>
            <person name="Dyer P.S."/>
            <person name="Sachs M.S."/>
            <person name="Osmani S.A."/>
            <person name="Birren B.W."/>
        </authorList>
    </citation>
    <scope>NUCLEOTIDE SEQUENCE [LARGE SCALE GENOMIC DNA]</scope>
    <source>
        <strain>FGSC A4 / ATCC 38163 / CBS 112.46 / NRRL 194 / M139</strain>
    </source>
</reference>
<reference key="2">
    <citation type="journal article" date="2009" name="Fungal Genet. Biol.">
        <title>The 2008 update of the Aspergillus nidulans genome annotation: a community effort.</title>
        <authorList>
            <person name="Wortman J.R."/>
            <person name="Gilsenan J.M."/>
            <person name="Joardar V."/>
            <person name="Deegan J."/>
            <person name="Clutterbuck J."/>
            <person name="Andersen M.R."/>
            <person name="Archer D."/>
            <person name="Bencina M."/>
            <person name="Braus G."/>
            <person name="Coutinho P."/>
            <person name="von Dohren H."/>
            <person name="Doonan J."/>
            <person name="Driessen A.J."/>
            <person name="Durek P."/>
            <person name="Espeso E."/>
            <person name="Fekete E."/>
            <person name="Flipphi M."/>
            <person name="Estrada C.G."/>
            <person name="Geysens S."/>
            <person name="Goldman G."/>
            <person name="de Groot P.W."/>
            <person name="Hansen K."/>
            <person name="Harris S.D."/>
            <person name="Heinekamp T."/>
            <person name="Helmstaedt K."/>
            <person name="Henrissat B."/>
            <person name="Hofmann G."/>
            <person name="Homan T."/>
            <person name="Horio T."/>
            <person name="Horiuchi H."/>
            <person name="James S."/>
            <person name="Jones M."/>
            <person name="Karaffa L."/>
            <person name="Karanyi Z."/>
            <person name="Kato M."/>
            <person name="Keller N."/>
            <person name="Kelly D.E."/>
            <person name="Kiel J.A."/>
            <person name="Kim J.M."/>
            <person name="van der Klei I.J."/>
            <person name="Klis F.M."/>
            <person name="Kovalchuk A."/>
            <person name="Krasevec N."/>
            <person name="Kubicek C.P."/>
            <person name="Liu B."/>
            <person name="Maccabe A."/>
            <person name="Meyer V."/>
            <person name="Mirabito P."/>
            <person name="Miskei M."/>
            <person name="Mos M."/>
            <person name="Mullins J."/>
            <person name="Nelson D.R."/>
            <person name="Nielsen J."/>
            <person name="Oakley B.R."/>
            <person name="Osmani S.A."/>
            <person name="Pakula T."/>
            <person name="Paszewski A."/>
            <person name="Paulsen I."/>
            <person name="Pilsyk S."/>
            <person name="Pocsi I."/>
            <person name="Punt P.J."/>
            <person name="Ram A.F."/>
            <person name="Ren Q."/>
            <person name="Robellet X."/>
            <person name="Robson G."/>
            <person name="Seiboth B."/>
            <person name="van Solingen P."/>
            <person name="Specht T."/>
            <person name="Sun J."/>
            <person name="Taheri-Talesh N."/>
            <person name="Takeshita N."/>
            <person name="Ussery D."/>
            <person name="vanKuyk P.A."/>
            <person name="Visser H."/>
            <person name="van de Vondervoort P.J."/>
            <person name="de Vries R.P."/>
            <person name="Walton J."/>
            <person name="Xiang X."/>
            <person name="Xiong Y."/>
            <person name="Zeng A.P."/>
            <person name="Brandt B.W."/>
            <person name="Cornell M.J."/>
            <person name="van den Hondel C.A."/>
            <person name="Visser J."/>
            <person name="Oliver S.G."/>
            <person name="Turner G."/>
        </authorList>
    </citation>
    <scope>GENOME REANNOTATION</scope>
    <source>
        <strain>FGSC A4 / ATCC 38163 / CBS 112.46 / NRRL 194 / M139</strain>
    </source>
</reference>
<reference key="3">
    <citation type="journal article" date="2012" name="Med. Chem. Commun.">
        <title>Identification and molecular genetic analysis of the cichorine gene cluster in Aspergillus nidulans.</title>
        <authorList>
            <person name="Sanchez J.F."/>
            <person name="Entwistle R."/>
            <person name="Corcoran D."/>
            <person name="Oakley B.R."/>
            <person name="Wang C.C."/>
        </authorList>
    </citation>
    <scope>FUNCTION</scope>
    <scope>DISRUPTION PHENOTYPE</scope>
</reference>
<reference key="4">
    <citation type="journal article" date="2019" name="Molecules">
        <title>Discovery of three new phytotoxins from the fungus Aspergillus nidulans by pathway inactivation.</title>
        <authorList>
            <person name="Liao L."/>
            <person name="Zhang X."/>
            <person name="Lou Y."/>
            <person name="Zhou C."/>
            <person name="Yuan Q."/>
            <person name="Gao J."/>
        </authorList>
    </citation>
    <scope>BIOTECHNOLOGY</scope>
</reference>